<accession>Q2FUA4</accession>
<protein>
    <recommendedName>
        <fullName evidence="1">Digeranylgeranylglycerophospholipid reductase</fullName>
        <shortName evidence="1">DGGGPL reductase</shortName>
        <ecNumber evidence="1">1.3.7.11</ecNumber>
    </recommendedName>
    <alternativeName>
        <fullName evidence="1">2,3-bis-O-geranylgeranylglyceryl phosphate reductase</fullName>
    </alternativeName>
    <alternativeName>
        <fullName evidence="1">Geranylgeranyl reductase</fullName>
        <shortName evidence="1">GGR</shortName>
    </alternativeName>
</protein>
<reference key="1">
    <citation type="journal article" date="2016" name="Stand. Genomic Sci.">
        <title>Complete genome sequence of Methanospirillum hungatei type strain JF1.</title>
        <authorList>
            <person name="Gunsalus R.P."/>
            <person name="Cook L.E."/>
            <person name="Crable B."/>
            <person name="Rohlin L."/>
            <person name="McDonald E."/>
            <person name="Mouttaki H."/>
            <person name="Sieber J.R."/>
            <person name="Poweleit N."/>
            <person name="Zhou H."/>
            <person name="Lapidus A.L."/>
            <person name="Daligault H.E."/>
            <person name="Land M."/>
            <person name="Gilna P."/>
            <person name="Ivanova N."/>
            <person name="Kyrpides N."/>
            <person name="Culley D.E."/>
            <person name="McInerney M.J."/>
        </authorList>
    </citation>
    <scope>NUCLEOTIDE SEQUENCE [LARGE SCALE GENOMIC DNA]</scope>
    <source>
        <strain>ATCC 27890 / DSM 864 / NBRC 100397 / JF-1</strain>
    </source>
</reference>
<dbReference type="EC" id="1.3.7.11" evidence="1"/>
<dbReference type="EMBL" id="CP000254">
    <property type="protein sequence ID" value="ABD40872.1"/>
    <property type="molecule type" value="Genomic_DNA"/>
</dbReference>
<dbReference type="RefSeq" id="WP_011448150.1">
    <property type="nucleotide sequence ID" value="NC_007796.1"/>
</dbReference>
<dbReference type="SMR" id="Q2FUA4"/>
<dbReference type="FunCoup" id="Q2FUA4">
    <property type="interactions" value="57"/>
</dbReference>
<dbReference type="STRING" id="323259.Mhun_1123"/>
<dbReference type="EnsemblBacteria" id="ABD40872">
    <property type="protein sequence ID" value="ABD40872"/>
    <property type="gene ID" value="Mhun_1123"/>
</dbReference>
<dbReference type="GeneID" id="3922488"/>
<dbReference type="KEGG" id="mhu:Mhun_1123"/>
<dbReference type="eggNOG" id="arCOG00570">
    <property type="taxonomic scope" value="Archaea"/>
</dbReference>
<dbReference type="HOGENOM" id="CLU_024648_0_0_2"/>
<dbReference type="InParanoid" id="Q2FUA4"/>
<dbReference type="OrthoDB" id="6062at2157"/>
<dbReference type="UniPathway" id="UPA00940"/>
<dbReference type="Proteomes" id="UP000001941">
    <property type="component" value="Chromosome"/>
</dbReference>
<dbReference type="GO" id="GO:0016020">
    <property type="term" value="C:membrane"/>
    <property type="evidence" value="ECO:0007669"/>
    <property type="project" value="GOC"/>
</dbReference>
<dbReference type="GO" id="GO:0050660">
    <property type="term" value="F:flavin adenine dinucleotide binding"/>
    <property type="evidence" value="ECO:0007669"/>
    <property type="project" value="UniProtKB-UniRule"/>
</dbReference>
<dbReference type="GO" id="GO:0045550">
    <property type="term" value="F:geranylgeranyl reductase activity"/>
    <property type="evidence" value="ECO:0007669"/>
    <property type="project" value="InterPro"/>
</dbReference>
<dbReference type="GO" id="GO:0016636">
    <property type="term" value="F:oxidoreductase activity, acting on the CH-CH group of donors, iron-sulfur protein as acceptor"/>
    <property type="evidence" value="ECO:0007669"/>
    <property type="project" value="UniProtKB-UniRule"/>
</dbReference>
<dbReference type="GO" id="GO:0016628">
    <property type="term" value="F:oxidoreductase activity, acting on the CH-CH group of donors, NAD or NADP as acceptor"/>
    <property type="evidence" value="ECO:0007669"/>
    <property type="project" value="InterPro"/>
</dbReference>
<dbReference type="GO" id="GO:0046474">
    <property type="term" value="P:glycerophospholipid biosynthetic process"/>
    <property type="evidence" value="ECO:0007669"/>
    <property type="project" value="UniProtKB-UniRule"/>
</dbReference>
<dbReference type="GO" id="GO:0046467">
    <property type="term" value="P:membrane lipid biosynthetic process"/>
    <property type="evidence" value="ECO:0007669"/>
    <property type="project" value="InterPro"/>
</dbReference>
<dbReference type="Gene3D" id="3.30.9.10">
    <property type="entry name" value="D-Amino Acid Oxidase, subunit A, domain 2"/>
    <property type="match status" value="1"/>
</dbReference>
<dbReference type="Gene3D" id="3.50.50.60">
    <property type="entry name" value="FAD/NAD(P)-binding domain"/>
    <property type="match status" value="1"/>
</dbReference>
<dbReference type="HAMAP" id="MF_01287">
    <property type="entry name" value="DGGGPL_reductase"/>
    <property type="match status" value="1"/>
</dbReference>
<dbReference type="InterPro" id="IPR023590">
    <property type="entry name" value="DGGGPL_reductase"/>
</dbReference>
<dbReference type="InterPro" id="IPR036188">
    <property type="entry name" value="FAD/NAD-bd_sf"/>
</dbReference>
<dbReference type="InterPro" id="IPR011777">
    <property type="entry name" value="Geranylgeranyl_Rdtase_fam"/>
</dbReference>
<dbReference type="InterPro" id="IPR050407">
    <property type="entry name" value="Geranylgeranyl_reductase"/>
</dbReference>
<dbReference type="InterPro" id="IPR054715">
    <property type="entry name" value="GGR_cat"/>
</dbReference>
<dbReference type="NCBIfam" id="TIGR02032">
    <property type="entry name" value="GG-red-SF"/>
    <property type="match status" value="1"/>
</dbReference>
<dbReference type="PANTHER" id="PTHR42685:SF18">
    <property type="entry name" value="DIGERANYLGERANYLGLYCEROPHOSPHOLIPID REDUCTASE"/>
    <property type="match status" value="1"/>
</dbReference>
<dbReference type="PANTHER" id="PTHR42685">
    <property type="entry name" value="GERANYLGERANYL DIPHOSPHATE REDUCTASE"/>
    <property type="match status" value="1"/>
</dbReference>
<dbReference type="Pfam" id="PF12831">
    <property type="entry name" value="FAD_oxidored"/>
    <property type="match status" value="1"/>
</dbReference>
<dbReference type="Pfam" id="PF22578">
    <property type="entry name" value="GGR_cat"/>
    <property type="match status" value="1"/>
</dbReference>
<dbReference type="PRINTS" id="PR00420">
    <property type="entry name" value="RNGMNOXGNASE"/>
</dbReference>
<dbReference type="SUPFAM" id="SSF51905">
    <property type="entry name" value="FAD/NAD(P)-binding domain"/>
    <property type="match status" value="1"/>
</dbReference>
<comment type="function">
    <text evidence="1">Is involved in the reduction of 2,3-digeranylgeranylglycerophospholipids (unsaturated archaeols) into 2,3-diphytanylglycerophospholipids (saturated archaeols) in the biosynthesis of archaeal membrane lipids. Catalyzes the formation of archaetidic acid (2,3-di-O-phytanyl-sn-glyceryl phosphate) from 2,3-di-O-geranylgeranylglyceryl phosphate (DGGGP) via the hydrogenation of each double bond of the isoprenoid chains. Is also probably able to reduce double bonds of geranyl groups in CDP-2,3-bis-O-(geranylgeranyl)-sn-glycerol and archaetidylserine, thus acting at various stages in the biosynthesis of archaeal membrane lipids.</text>
</comment>
<comment type="catalytic activity">
    <reaction evidence="1">
        <text>a 2,3-bis-O-phytanyl-sn-glycerol 1-phospholipid + 8 oxidized 2[4Fe-4S]-[ferredoxin] = a 2,3-bis-O-(geranylgeranyl)-sn-glycerol 1-phospholipid + 8 reduced 2[4Fe-4S]-[ferredoxin] + 16 H(+)</text>
        <dbReference type="Rhea" id="RHEA:54324"/>
        <dbReference type="Rhea" id="RHEA-COMP:10002"/>
        <dbReference type="Rhea" id="RHEA-COMP:10004"/>
        <dbReference type="ChEBI" id="CHEBI:15378"/>
        <dbReference type="ChEBI" id="CHEBI:33722"/>
        <dbReference type="ChEBI" id="CHEBI:33723"/>
        <dbReference type="ChEBI" id="CHEBI:138139"/>
        <dbReference type="ChEBI" id="CHEBI:138140"/>
        <dbReference type="EC" id="1.3.7.11"/>
    </reaction>
    <physiologicalReaction direction="right-to-left" evidence="1">
        <dbReference type="Rhea" id="RHEA:54326"/>
    </physiologicalReaction>
</comment>
<comment type="catalytic activity">
    <reaction evidence="1">
        <text>2,3-bis-O-(phytanyl)-sn-glycerol 1-phosphate + 8 oxidized 2[4Fe-4S]-[ferredoxin] = 2,3-bis-O-(geranylgeranyl)-sn-glycerol 1-phosphate + 8 reduced 2[4Fe-4S]-[ferredoxin] + 16 H(+)</text>
        <dbReference type="Rhea" id="RHEA:36159"/>
        <dbReference type="Rhea" id="RHEA-COMP:10002"/>
        <dbReference type="Rhea" id="RHEA-COMP:10004"/>
        <dbReference type="ChEBI" id="CHEBI:15378"/>
        <dbReference type="ChEBI" id="CHEBI:33722"/>
        <dbReference type="ChEBI" id="CHEBI:33723"/>
        <dbReference type="ChEBI" id="CHEBI:58837"/>
        <dbReference type="ChEBI" id="CHEBI:73125"/>
        <dbReference type="EC" id="1.3.7.11"/>
    </reaction>
    <physiologicalReaction direction="right-to-left" evidence="1">
        <dbReference type="Rhea" id="RHEA:36161"/>
    </physiologicalReaction>
</comment>
<comment type="catalytic activity">
    <reaction evidence="1">
        <text>a 2,3-bis-O-phytanyl-sn-glycerol 1-phospholipid + 8 A = a 2,3-bis-O-(geranylgeranyl)-sn-glycerol 1-phospholipid + 8 AH2</text>
        <dbReference type="Rhea" id="RHEA:64376"/>
        <dbReference type="ChEBI" id="CHEBI:13193"/>
        <dbReference type="ChEBI" id="CHEBI:17499"/>
        <dbReference type="ChEBI" id="CHEBI:138139"/>
        <dbReference type="ChEBI" id="CHEBI:138140"/>
    </reaction>
    <physiologicalReaction direction="right-to-left" evidence="1">
        <dbReference type="Rhea" id="RHEA:64378"/>
    </physiologicalReaction>
</comment>
<comment type="catalytic activity">
    <reaction evidence="1">
        <text>CDP-2,3-bis-O-(geranylgeranyl)-sn-glycerol + 8 AH2 = CDP-2,3-bis-O-(phytanyl)-sn-glycerol + 8 A</text>
        <dbReference type="Rhea" id="RHEA:84207"/>
        <dbReference type="ChEBI" id="CHEBI:13193"/>
        <dbReference type="ChEBI" id="CHEBI:17499"/>
        <dbReference type="ChEBI" id="CHEBI:58838"/>
        <dbReference type="ChEBI" id="CHEBI:74004"/>
    </reaction>
    <physiologicalReaction direction="left-to-right" evidence="1">
        <dbReference type="Rhea" id="RHEA:84208"/>
    </physiologicalReaction>
</comment>
<comment type="catalytic activity">
    <reaction evidence="1">
        <text>archaetidylserine + 8 AH2 = 2,3-bis-O-phytanyl-sn-glycero-3-phospho-L-serine + 8 A</text>
        <dbReference type="Rhea" id="RHEA:84215"/>
        <dbReference type="ChEBI" id="CHEBI:13193"/>
        <dbReference type="ChEBI" id="CHEBI:17499"/>
        <dbReference type="ChEBI" id="CHEBI:71517"/>
        <dbReference type="ChEBI" id="CHEBI:74853"/>
    </reaction>
    <physiologicalReaction direction="left-to-right" evidence="1">
        <dbReference type="Rhea" id="RHEA:84216"/>
    </physiologicalReaction>
</comment>
<comment type="cofactor">
    <cofactor evidence="1">
        <name>FAD</name>
        <dbReference type="ChEBI" id="CHEBI:57692"/>
    </cofactor>
    <text evidence="1">Binds 1 FAD per subunit.</text>
</comment>
<comment type="pathway">
    <text evidence="1">Membrane lipid metabolism; glycerophospholipid metabolism.</text>
</comment>
<comment type="miscellaneous">
    <text evidence="1">Reduction reaction proceeds via syn addition of hydrogen for double bonds.</text>
</comment>
<comment type="similarity">
    <text evidence="1">Belongs to the geranylgeranyl reductase family. DGGGPL reductase subfamily.</text>
</comment>
<name>GGR_METHJ</name>
<keyword id="KW-0274">FAD</keyword>
<keyword id="KW-0285">Flavoprotein</keyword>
<keyword id="KW-0444">Lipid biosynthesis</keyword>
<keyword id="KW-0443">Lipid metabolism</keyword>
<keyword id="KW-0560">Oxidoreductase</keyword>
<keyword id="KW-0594">Phospholipid biosynthesis</keyword>
<keyword id="KW-1208">Phospholipid metabolism</keyword>
<keyword id="KW-1185">Reference proteome</keyword>
<gene>
    <name type="ordered locus">Mhun_1123</name>
</gene>
<sequence length="402" mass="43045">MKREYDVLVVGGGPGGAFAAKTFAEKGYSVLLTEKRPAIGAPVRCAEGVGKALMHEFFKPEDRWVAAEIEKANIIAPDGFKMELEPEKAGAEVGYVLHRKVFDRDLVWMAAGAGADIQVKTRAVTPIMEDGAVKGAILNQGGIAQEVRAGLTIAADGVESKFARWCGVDTTVPLREMETCAQYLMTGIDIDAHATEFYVGNNIAPGGYVWIFPKGDKTANVGIGVGGDRCKPGNRPIDYLNRFVARNFPNGKTIELIAGGVSICQPLPCTVANNLMIVGDAARVSDPLTGGGIYAALYTGKLAGDVGSKAIEKGDTSTQALMPYDETWRASYLGKALERNYQIKEVFVKLNDDDLNAIVHSVSKMNLSDFNTLNLIKNIIAANPKLAIKLGKAGLKSLLDSF</sequence>
<organism>
    <name type="scientific">Methanospirillum hungatei JF-1 (strain ATCC 27890 / DSM 864 / NBRC 100397 / JF-1)</name>
    <dbReference type="NCBI Taxonomy" id="323259"/>
    <lineage>
        <taxon>Archaea</taxon>
        <taxon>Methanobacteriati</taxon>
        <taxon>Methanobacteriota</taxon>
        <taxon>Stenosarchaea group</taxon>
        <taxon>Methanomicrobia</taxon>
        <taxon>Methanomicrobiales</taxon>
        <taxon>Methanospirillaceae</taxon>
        <taxon>Methanospirillum</taxon>
    </lineage>
</organism>
<proteinExistence type="inferred from homology"/>
<evidence type="ECO:0000255" key="1">
    <source>
        <dbReference type="HAMAP-Rule" id="MF_01287"/>
    </source>
</evidence>
<feature type="chain" id="PRO_0000351457" description="Digeranylgeranylglycerophospholipid reductase">
    <location>
        <begin position="1"/>
        <end position="402"/>
    </location>
</feature>
<feature type="binding site" evidence="1">
    <location>
        <position position="15"/>
    </location>
    <ligand>
        <name>FAD</name>
        <dbReference type="ChEBI" id="CHEBI:57692"/>
    </ligand>
</feature>
<feature type="binding site" evidence="1">
    <location>
        <position position="34"/>
    </location>
    <ligand>
        <name>FAD</name>
        <dbReference type="ChEBI" id="CHEBI:57692"/>
    </ligand>
</feature>
<feature type="binding site" evidence="1">
    <location>
        <position position="45"/>
    </location>
    <ligand>
        <name>FAD</name>
        <dbReference type="ChEBI" id="CHEBI:57692"/>
    </ligand>
</feature>
<feature type="binding site" evidence="1">
    <location>
        <position position="46"/>
    </location>
    <ligand>
        <name>FAD</name>
        <dbReference type="ChEBI" id="CHEBI:57692"/>
    </ligand>
</feature>
<feature type="binding site" evidence="1">
    <location>
        <position position="48"/>
    </location>
    <ligand>
        <name>FAD</name>
        <dbReference type="ChEBI" id="CHEBI:57692"/>
    </ligand>
</feature>
<feature type="binding site" evidence="1">
    <location>
        <position position="99"/>
    </location>
    <ligand>
        <name>FAD</name>
        <dbReference type="ChEBI" id="CHEBI:57692"/>
    </ligand>
</feature>
<feature type="binding site" evidence="1">
    <location>
        <position position="123"/>
    </location>
    <ligand>
        <name>FAD</name>
        <dbReference type="ChEBI" id="CHEBI:57692"/>
    </ligand>
</feature>
<feature type="binding site" evidence="1">
    <location>
        <position position="280"/>
    </location>
    <ligand>
        <name>FAD</name>
        <dbReference type="ChEBI" id="CHEBI:57692"/>
    </ligand>
</feature>
<feature type="binding site" evidence="1">
    <location>
        <position position="292"/>
    </location>
    <ligand>
        <name>FAD</name>
        <dbReference type="ChEBI" id="CHEBI:57692"/>
    </ligand>
</feature>
<feature type="binding site" evidence="1">
    <location>
        <position position="293"/>
    </location>
    <ligand>
        <name>FAD</name>
        <dbReference type="ChEBI" id="CHEBI:57692"/>
    </ligand>
</feature>